<proteinExistence type="inferred from homology"/>
<keyword id="KW-0687">Ribonucleoprotein</keyword>
<keyword id="KW-0689">Ribosomal protein</keyword>
<protein>
    <recommendedName>
        <fullName evidence="1">Large ribosomal subunit protein bL19</fullName>
    </recommendedName>
    <alternativeName>
        <fullName evidence="2">50S ribosomal protein L19</fullName>
    </alternativeName>
</protein>
<gene>
    <name evidence="1" type="primary">rplS</name>
    <name type="ordered locus">VC0395_A0098</name>
    <name type="ordered locus">VC395_0581</name>
</gene>
<feature type="chain" id="PRO_1000072251" description="Large ribosomal subunit protein bL19">
    <location>
        <begin position="1"/>
        <end position="117"/>
    </location>
</feature>
<comment type="function">
    <text evidence="1">This protein is located at the 30S-50S ribosomal subunit interface and may play a role in the structure and function of the aminoacyl-tRNA binding site.</text>
</comment>
<comment type="similarity">
    <text evidence="1">Belongs to the bacterial ribosomal protein bL19 family.</text>
</comment>
<sequence>MSNIIKALEQEQMKQDLPQFAPGDTVVVQVKVKEGDRERLQAFEGIVIAIRNRGLHSAFTVRKISNGEGVERTFQTHSPVVDSIEVKRRGAVRRAKLYYLRDLSGKAARIKEKLAKK</sequence>
<evidence type="ECO:0000255" key="1">
    <source>
        <dbReference type="HAMAP-Rule" id="MF_00402"/>
    </source>
</evidence>
<evidence type="ECO:0000305" key="2"/>
<dbReference type="EMBL" id="CP000627">
    <property type="protein sequence ID" value="ABQ21145.1"/>
    <property type="molecule type" value="Genomic_DNA"/>
</dbReference>
<dbReference type="EMBL" id="CP001235">
    <property type="protein sequence ID" value="ACP08600.1"/>
    <property type="molecule type" value="Genomic_DNA"/>
</dbReference>
<dbReference type="RefSeq" id="WP_000065250.1">
    <property type="nucleotide sequence ID" value="NZ_JAACZH010000006.1"/>
</dbReference>
<dbReference type="SMR" id="A5F992"/>
<dbReference type="GeneID" id="94014655"/>
<dbReference type="KEGG" id="vco:VC0395_A0098"/>
<dbReference type="KEGG" id="vcr:VC395_0581"/>
<dbReference type="PATRIC" id="fig|345073.21.peg.569"/>
<dbReference type="eggNOG" id="COG0335">
    <property type="taxonomic scope" value="Bacteria"/>
</dbReference>
<dbReference type="HOGENOM" id="CLU_103507_2_1_6"/>
<dbReference type="OrthoDB" id="9803541at2"/>
<dbReference type="Proteomes" id="UP000000249">
    <property type="component" value="Chromosome 2"/>
</dbReference>
<dbReference type="GO" id="GO:0022625">
    <property type="term" value="C:cytosolic large ribosomal subunit"/>
    <property type="evidence" value="ECO:0007669"/>
    <property type="project" value="TreeGrafter"/>
</dbReference>
<dbReference type="GO" id="GO:0003735">
    <property type="term" value="F:structural constituent of ribosome"/>
    <property type="evidence" value="ECO:0007669"/>
    <property type="project" value="InterPro"/>
</dbReference>
<dbReference type="GO" id="GO:0006412">
    <property type="term" value="P:translation"/>
    <property type="evidence" value="ECO:0007669"/>
    <property type="project" value="UniProtKB-UniRule"/>
</dbReference>
<dbReference type="FunFam" id="2.30.30.790:FF:000001">
    <property type="entry name" value="50S ribosomal protein L19"/>
    <property type="match status" value="1"/>
</dbReference>
<dbReference type="Gene3D" id="2.30.30.790">
    <property type="match status" value="1"/>
</dbReference>
<dbReference type="HAMAP" id="MF_00402">
    <property type="entry name" value="Ribosomal_bL19"/>
    <property type="match status" value="1"/>
</dbReference>
<dbReference type="InterPro" id="IPR001857">
    <property type="entry name" value="Ribosomal_bL19"/>
</dbReference>
<dbReference type="InterPro" id="IPR018257">
    <property type="entry name" value="Ribosomal_bL19_CS"/>
</dbReference>
<dbReference type="InterPro" id="IPR038657">
    <property type="entry name" value="Ribosomal_bL19_sf"/>
</dbReference>
<dbReference type="InterPro" id="IPR008991">
    <property type="entry name" value="Translation_prot_SH3-like_sf"/>
</dbReference>
<dbReference type="NCBIfam" id="TIGR01024">
    <property type="entry name" value="rplS_bact"/>
    <property type="match status" value="1"/>
</dbReference>
<dbReference type="PANTHER" id="PTHR15680:SF9">
    <property type="entry name" value="LARGE RIBOSOMAL SUBUNIT PROTEIN BL19M"/>
    <property type="match status" value="1"/>
</dbReference>
<dbReference type="PANTHER" id="PTHR15680">
    <property type="entry name" value="RIBOSOMAL PROTEIN L19"/>
    <property type="match status" value="1"/>
</dbReference>
<dbReference type="Pfam" id="PF01245">
    <property type="entry name" value="Ribosomal_L19"/>
    <property type="match status" value="1"/>
</dbReference>
<dbReference type="PIRSF" id="PIRSF002191">
    <property type="entry name" value="Ribosomal_L19"/>
    <property type="match status" value="1"/>
</dbReference>
<dbReference type="PRINTS" id="PR00061">
    <property type="entry name" value="RIBOSOMALL19"/>
</dbReference>
<dbReference type="SUPFAM" id="SSF50104">
    <property type="entry name" value="Translation proteins SH3-like domain"/>
    <property type="match status" value="1"/>
</dbReference>
<dbReference type="PROSITE" id="PS01015">
    <property type="entry name" value="RIBOSOMAL_L19"/>
    <property type="match status" value="1"/>
</dbReference>
<name>RL19_VIBC3</name>
<accession>A5F992</accession>
<accession>C3LX90</accession>
<organism>
    <name type="scientific">Vibrio cholerae serotype O1 (strain ATCC 39541 / Classical Ogawa 395 / O395)</name>
    <dbReference type="NCBI Taxonomy" id="345073"/>
    <lineage>
        <taxon>Bacteria</taxon>
        <taxon>Pseudomonadati</taxon>
        <taxon>Pseudomonadota</taxon>
        <taxon>Gammaproteobacteria</taxon>
        <taxon>Vibrionales</taxon>
        <taxon>Vibrionaceae</taxon>
        <taxon>Vibrio</taxon>
    </lineage>
</organism>
<reference key="1">
    <citation type="submission" date="2007-03" db="EMBL/GenBank/DDBJ databases">
        <authorList>
            <person name="Heidelberg J."/>
        </authorList>
    </citation>
    <scope>NUCLEOTIDE SEQUENCE [LARGE SCALE GENOMIC DNA]</scope>
    <source>
        <strain>ATCC 39541 / Classical Ogawa 395 / O395</strain>
    </source>
</reference>
<reference key="2">
    <citation type="journal article" date="2008" name="PLoS ONE">
        <title>A recalibrated molecular clock and independent origins for the cholera pandemic clones.</title>
        <authorList>
            <person name="Feng L."/>
            <person name="Reeves P.R."/>
            <person name="Lan R."/>
            <person name="Ren Y."/>
            <person name="Gao C."/>
            <person name="Zhou Z."/>
            <person name="Ren Y."/>
            <person name="Cheng J."/>
            <person name="Wang W."/>
            <person name="Wang J."/>
            <person name="Qian W."/>
            <person name="Li D."/>
            <person name="Wang L."/>
        </authorList>
    </citation>
    <scope>NUCLEOTIDE SEQUENCE [LARGE SCALE GENOMIC DNA]</scope>
    <source>
        <strain>ATCC 39541 / Classical Ogawa 395 / O395</strain>
    </source>
</reference>